<reference key="1">
    <citation type="journal article" date="1993" name="Plant J.">
        <title>The profilin multigene family of maize: differential expression of three isoforms.</title>
        <authorList>
            <person name="Staiger C.J."/>
            <person name="Goodbody K.C."/>
            <person name="Hussey P.J."/>
            <person name="Valenta R."/>
            <person name="Droebak B.K."/>
            <person name="Lloyd C.W."/>
        </authorList>
    </citation>
    <scope>NUCLEOTIDE SEQUENCE [MRNA]</scope>
    <source>
        <strain>cv. A188</strain>
        <tissue>Pollen</tissue>
    </source>
</reference>
<reference key="2">
    <citation type="journal article" date="2013" name="PLoS ONE">
        <title>Analysis of the effects of polymorphism on pollen profilin structural functionality and the generation of conformational, T- and B-cell epitopes.</title>
        <authorList>
            <person name="Jimenez-Lopez J.C."/>
            <person name="Rodriguez-Garcia M.I."/>
            <person name="Alche J.D."/>
        </authorList>
    </citation>
    <scope>3D-STRUCTURE MODELING</scope>
    <scope>DISULFIDE BOND</scope>
</reference>
<feature type="initiator methionine" description="Removed" evidence="1">
    <location>
        <position position="1"/>
    </location>
</feature>
<feature type="chain" id="PRO_0000199647" description="Profilin-2">
    <location>
        <begin position="2"/>
        <end position="131"/>
    </location>
</feature>
<feature type="short sequence motif" description="Involved in PIP2 interaction">
    <location>
        <begin position="81"/>
        <end position="97"/>
    </location>
</feature>
<feature type="modified residue" description="Phosphothreonine" evidence="1">
    <location>
        <position position="111"/>
    </location>
</feature>
<feature type="disulfide bond" evidence="3">
    <location>
        <begin position="13"/>
        <end position="115"/>
    </location>
</feature>
<dbReference type="EMBL" id="X73280">
    <property type="protein sequence ID" value="CAA51719.1"/>
    <property type="status" value="ALT_INIT"/>
    <property type="molecule type" value="mRNA"/>
</dbReference>
<dbReference type="PIR" id="S35797">
    <property type="entry name" value="S35797"/>
</dbReference>
<dbReference type="RefSeq" id="NP_001105451.1">
    <property type="nucleotide sequence ID" value="NM_001111981.2"/>
</dbReference>
<dbReference type="SMR" id="P35082"/>
<dbReference type="STRING" id="4577.P35082"/>
<dbReference type="Allergome" id="3531">
    <property type="allergen name" value="Zea m 12.0102"/>
</dbReference>
<dbReference type="Allergome" id="682">
    <property type="allergen name" value="Zea m 12"/>
</dbReference>
<dbReference type="PaxDb" id="4577-GRMZM2G109842_P01"/>
<dbReference type="EnsemblPlants" id="Zm00001eb353570_T001">
    <property type="protein sequence ID" value="Zm00001eb353570_P001"/>
    <property type="gene ID" value="Zm00001eb353570"/>
</dbReference>
<dbReference type="Gramene" id="Zm00001eb353570_T001">
    <property type="protein sequence ID" value="Zm00001eb353570_P001"/>
    <property type="gene ID" value="Zm00001eb353570"/>
</dbReference>
<dbReference type="MaizeGDB" id="78603"/>
<dbReference type="eggNOG" id="KOG1755">
    <property type="taxonomic scope" value="Eukaryota"/>
</dbReference>
<dbReference type="InParanoid" id="P35082"/>
<dbReference type="Proteomes" id="UP000007305">
    <property type="component" value="Chromosome 8"/>
</dbReference>
<dbReference type="GO" id="GO:0005938">
    <property type="term" value="C:cell cortex"/>
    <property type="evidence" value="ECO:0000318"/>
    <property type="project" value="GO_Central"/>
</dbReference>
<dbReference type="GO" id="GO:0005856">
    <property type="term" value="C:cytoskeleton"/>
    <property type="evidence" value="ECO:0007669"/>
    <property type="project" value="UniProtKB-SubCell"/>
</dbReference>
<dbReference type="GO" id="GO:0003785">
    <property type="term" value="F:actin monomer binding"/>
    <property type="evidence" value="ECO:0000314"/>
    <property type="project" value="AgBase"/>
</dbReference>
<dbReference type="GO" id="GO:0070064">
    <property type="term" value="F:proline-rich region binding"/>
    <property type="evidence" value="ECO:0000314"/>
    <property type="project" value="AgBase"/>
</dbReference>
<dbReference type="GO" id="GO:0007097">
    <property type="term" value="P:nuclear migration"/>
    <property type="evidence" value="ECO:0000314"/>
    <property type="project" value="AgBase"/>
</dbReference>
<dbReference type="GO" id="GO:0032956">
    <property type="term" value="P:regulation of actin cytoskeleton organization"/>
    <property type="evidence" value="ECO:0000304"/>
    <property type="project" value="AgBase"/>
</dbReference>
<dbReference type="CDD" id="cd00148">
    <property type="entry name" value="PROF"/>
    <property type="match status" value="1"/>
</dbReference>
<dbReference type="FunFam" id="3.30.450.30:FF:000001">
    <property type="entry name" value="Profilin"/>
    <property type="match status" value="1"/>
</dbReference>
<dbReference type="Gene3D" id="3.30.450.30">
    <property type="entry name" value="Dynein light chain 2a, cytoplasmic"/>
    <property type="match status" value="1"/>
</dbReference>
<dbReference type="InterPro" id="IPR048278">
    <property type="entry name" value="PFN"/>
</dbReference>
<dbReference type="InterPro" id="IPR005455">
    <property type="entry name" value="PFN_euk"/>
</dbReference>
<dbReference type="InterPro" id="IPR036140">
    <property type="entry name" value="PFN_sf"/>
</dbReference>
<dbReference type="InterPro" id="IPR027310">
    <property type="entry name" value="Profilin_CS"/>
</dbReference>
<dbReference type="PANTHER" id="PTHR11604">
    <property type="entry name" value="PROFILIN"/>
    <property type="match status" value="1"/>
</dbReference>
<dbReference type="PANTHER" id="PTHR11604:SF51">
    <property type="entry name" value="PROFILIN-A"/>
    <property type="match status" value="1"/>
</dbReference>
<dbReference type="Pfam" id="PF00235">
    <property type="entry name" value="Profilin"/>
    <property type="match status" value="1"/>
</dbReference>
<dbReference type="PRINTS" id="PR00392">
    <property type="entry name" value="PROFILIN"/>
</dbReference>
<dbReference type="PRINTS" id="PR01640">
    <property type="entry name" value="PROFILINPLNT"/>
</dbReference>
<dbReference type="SMART" id="SM00392">
    <property type="entry name" value="PROF"/>
    <property type="match status" value="1"/>
</dbReference>
<dbReference type="SUPFAM" id="SSF55770">
    <property type="entry name" value="Profilin (actin-binding protein)"/>
    <property type="match status" value="1"/>
</dbReference>
<dbReference type="PROSITE" id="PS00414">
    <property type="entry name" value="PROFILIN"/>
    <property type="match status" value="1"/>
</dbReference>
<gene>
    <name type="primary">PRO2</name>
    <name type="synonym">PRF2</name>
</gene>
<name>PROF2_MAIZE</name>
<protein>
    <recommendedName>
        <fullName>Profilin-2</fullName>
    </recommendedName>
    <alternativeName>
        <fullName>Pollen allergen Zea m 12</fullName>
    </alternativeName>
    <alternativeName>
        <fullName>ZmPRO2</fullName>
    </alternativeName>
    <allergenName>Zea m 12</allergenName>
</protein>
<accession>P35082</accession>
<proteinExistence type="evidence at protein level"/>
<comment type="function">
    <text>Binds to actin and affects the structure of the cytoskeleton. At high concentrations, profilin prevents the polymerization of actin, whereas it enhances it at low concentrations. By binding to PIP2, it inhibits the formation of IP3 and DG.</text>
</comment>
<comment type="subunit">
    <text>Occurs in many kinds of cells as a complex with monomeric actin in a 1:1 ratio.</text>
</comment>
<comment type="subcellular location">
    <subcellularLocation>
        <location>Cytoplasm</location>
        <location>Cytoskeleton</location>
    </subcellularLocation>
</comment>
<comment type="tissue specificity">
    <text>Pollen specific.</text>
</comment>
<comment type="PTM">
    <text evidence="1">Phosphorylated by MAP kinases.</text>
</comment>
<comment type="polymorphism">
    <text>Several isoforms of the allergen exist due to polymorphism.</text>
</comment>
<comment type="allergen">
    <text>Causes an allergic reaction in human.</text>
</comment>
<comment type="miscellaneous">
    <text evidence="3">The variability of the residues taking part of IgE-binding epitopes might be responsible of the difference in cross-reactivity among olive pollen cultivars, and between distantly related pollen species, leading to a variable range of allergy reactions among atopic patients.</text>
</comment>
<comment type="similarity">
    <text evidence="2">Belongs to the profilin family.</text>
</comment>
<comment type="sequence caution" evidence="2">
    <conflict type="erroneous initiation">
        <sequence resource="EMBL-CDS" id="CAA51719"/>
    </conflict>
    <text>Extended N-terminus.</text>
</comment>
<sequence>MSWQAYVDEHLMCEIEGHHLAAAAIVGHDGAAWAQSTAFPEFKTEDMANIMKDFDEPGHLAPTGLFLGPTKYMVIQGEPGAVIRGKKGSGGITVKKTGQALVVGIYDEPMTPGQCNMVVERLGDYLLEQGM</sequence>
<keyword id="KW-0009">Actin-binding</keyword>
<keyword id="KW-0020">Allergen</keyword>
<keyword id="KW-0963">Cytoplasm</keyword>
<keyword id="KW-0206">Cytoskeleton</keyword>
<keyword id="KW-1015">Disulfide bond</keyword>
<keyword id="KW-0597">Phosphoprotein</keyword>
<keyword id="KW-1185">Reference proteome</keyword>
<organism>
    <name type="scientific">Zea mays</name>
    <name type="common">Maize</name>
    <dbReference type="NCBI Taxonomy" id="4577"/>
    <lineage>
        <taxon>Eukaryota</taxon>
        <taxon>Viridiplantae</taxon>
        <taxon>Streptophyta</taxon>
        <taxon>Embryophyta</taxon>
        <taxon>Tracheophyta</taxon>
        <taxon>Spermatophyta</taxon>
        <taxon>Magnoliopsida</taxon>
        <taxon>Liliopsida</taxon>
        <taxon>Poales</taxon>
        <taxon>Poaceae</taxon>
        <taxon>PACMAD clade</taxon>
        <taxon>Panicoideae</taxon>
        <taxon>Andropogonodae</taxon>
        <taxon>Andropogoneae</taxon>
        <taxon>Tripsacinae</taxon>
        <taxon>Zea</taxon>
    </lineage>
</organism>
<evidence type="ECO:0000250" key="1"/>
<evidence type="ECO:0000305" key="2"/>
<evidence type="ECO:0000305" key="3">
    <source>
    </source>
</evidence>